<name>P2C24_ARATH</name>
<dbReference type="EC" id="3.1.3.16"/>
<dbReference type="EMBL" id="AC004561">
    <property type="protein sequence ID" value="AAC95200.1"/>
    <property type="molecule type" value="Genomic_DNA"/>
</dbReference>
<dbReference type="EMBL" id="CP002685">
    <property type="protein sequence ID" value="AEC08244.1"/>
    <property type="molecule type" value="Genomic_DNA"/>
</dbReference>
<dbReference type="EMBL" id="DQ056553">
    <property type="protein sequence ID" value="AAY78704.1"/>
    <property type="molecule type" value="mRNA"/>
</dbReference>
<dbReference type="EMBL" id="BT022047">
    <property type="protein sequence ID" value="AAY25459.1"/>
    <property type="molecule type" value="mRNA"/>
</dbReference>
<dbReference type="EMBL" id="BT023483">
    <property type="protein sequence ID" value="AAY57322.1"/>
    <property type="molecule type" value="mRNA"/>
</dbReference>
<dbReference type="PIR" id="F84695">
    <property type="entry name" value="F84695"/>
</dbReference>
<dbReference type="RefSeq" id="NP_180499.1">
    <property type="nucleotide sequence ID" value="NM_128492.3"/>
</dbReference>
<dbReference type="SMR" id="Q9ZW21"/>
<dbReference type="BioGRID" id="2837">
    <property type="interactions" value="15"/>
</dbReference>
<dbReference type="DIP" id="DIP-48991N"/>
<dbReference type="FunCoup" id="Q9ZW21">
    <property type="interactions" value="368"/>
</dbReference>
<dbReference type="IntAct" id="Q9ZW21">
    <property type="interactions" value="18"/>
</dbReference>
<dbReference type="STRING" id="3702.Q9ZW21"/>
<dbReference type="GlyGen" id="Q9ZW21">
    <property type="glycosylation" value="1 site"/>
</dbReference>
<dbReference type="iPTMnet" id="Q9ZW21"/>
<dbReference type="PaxDb" id="3702-AT2G29380.1"/>
<dbReference type="EnsemblPlants" id="AT2G29380.1">
    <property type="protein sequence ID" value="AT2G29380.1"/>
    <property type="gene ID" value="AT2G29380"/>
</dbReference>
<dbReference type="GeneID" id="817487"/>
<dbReference type="Gramene" id="AT2G29380.1">
    <property type="protein sequence ID" value="AT2G29380.1"/>
    <property type="gene ID" value="AT2G29380"/>
</dbReference>
<dbReference type="KEGG" id="ath:AT2G29380"/>
<dbReference type="Araport" id="AT2G29380"/>
<dbReference type="TAIR" id="AT2G29380">
    <property type="gene designation" value="HAI3"/>
</dbReference>
<dbReference type="eggNOG" id="KOG0698">
    <property type="taxonomic scope" value="Eukaryota"/>
</dbReference>
<dbReference type="HOGENOM" id="CLU_013173_20_0_1"/>
<dbReference type="InParanoid" id="Q9ZW21"/>
<dbReference type="OMA" id="SWTETME"/>
<dbReference type="PhylomeDB" id="Q9ZW21"/>
<dbReference type="PRO" id="PR:Q9ZW21"/>
<dbReference type="Proteomes" id="UP000006548">
    <property type="component" value="Chromosome 2"/>
</dbReference>
<dbReference type="ExpressionAtlas" id="Q9ZW21">
    <property type="expression patterns" value="baseline and differential"/>
</dbReference>
<dbReference type="GO" id="GO:0046872">
    <property type="term" value="F:metal ion binding"/>
    <property type="evidence" value="ECO:0007669"/>
    <property type="project" value="UniProtKB-KW"/>
</dbReference>
<dbReference type="GO" id="GO:0004722">
    <property type="term" value="F:protein serine/threonine phosphatase activity"/>
    <property type="evidence" value="ECO:0007669"/>
    <property type="project" value="UniProtKB-EC"/>
</dbReference>
<dbReference type="CDD" id="cd00143">
    <property type="entry name" value="PP2Cc"/>
    <property type="match status" value="1"/>
</dbReference>
<dbReference type="FunFam" id="3.60.40.10:FF:000065">
    <property type="entry name" value="Protein phosphatase 2C 37"/>
    <property type="match status" value="1"/>
</dbReference>
<dbReference type="Gene3D" id="3.60.40.10">
    <property type="entry name" value="PPM-type phosphatase domain"/>
    <property type="match status" value="1"/>
</dbReference>
<dbReference type="InterPro" id="IPR015655">
    <property type="entry name" value="PP2C"/>
</dbReference>
<dbReference type="InterPro" id="IPR000222">
    <property type="entry name" value="PP2C_BS"/>
</dbReference>
<dbReference type="InterPro" id="IPR036457">
    <property type="entry name" value="PPM-type-like_dom_sf"/>
</dbReference>
<dbReference type="InterPro" id="IPR001932">
    <property type="entry name" value="PPM-type_phosphatase-like_dom"/>
</dbReference>
<dbReference type="PANTHER" id="PTHR47992">
    <property type="entry name" value="PROTEIN PHOSPHATASE"/>
    <property type="match status" value="1"/>
</dbReference>
<dbReference type="Pfam" id="PF00481">
    <property type="entry name" value="PP2C"/>
    <property type="match status" value="1"/>
</dbReference>
<dbReference type="SMART" id="SM00332">
    <property type="entry name" value="PP2Cc"/>
    <property type="match status" value="1"/>
</dbReference>
<dbReference type="SUPFAM" id="SSF81606">
    <property type="entry name" value="PP2C-like"/>
    <property type="match status" value="1"/>
</dbReference>
<dbReference type="PROSITE" id="PS01032">
    <property type="entry name" value="PPM_1"/>
    <property type="match status" value="1"/>
</dbReference>
<dbReference type="PROSITE" id="PS51746">
    <property type="entry name" value="PPM_2"/>
    <property type="match status" value="1"/>
</dbReference>
<feature type="chain" id="PRO_0000367953" description="Probable protein phosphatase 2C 24">
    <location>
        <begin position="1"/>
        <end position="362"/>
    </location>
</feature>
<feature type="domain" description="PPM-type phosphatase" evidence="2">
    <location>
        <begin position="77"/>
        <end position="360"/>
    </location>
</feature>
<feature type="binding site" evidence="1">
    <location>
        <position position="117"/>
    </location>
    <ligand>
        <name>Mn(2+)</name>
        <dbReference type="ChEBI" id="CHEBI:29035"/>
        <label>1</label>
    </ligand>
</feature>
<feature type="binding site" evidence="1">
    <location>
        <position position="117"/>
    </location>
    <ligand>
        <name>Mn(2+)</name>
        <dbReference type="ChEBI" id="CHEBI:29035"/>
        <label>2</label>
    </ligand>
</feature>
<feature type="binding site" evidence="1">
    <location>
        <position position="118"/>
    </location>
    <ligand>
        <name>Mn(2+)</name>
        <dbReference type="ChEBI" id="CHEBI:29035"/>
        <label>1</label>
    </ligand>
</feature>
<feature type="binding site" evidence="1">
    <location>
        <position position="295"/>
    </location>
    <ligand>
        <name>Mn(2+)</name>
        <dbReference type="ChEBI" id="CHEBI:29035"/>
        <label>2</label>
    </ligand>
</feature>
<feature type="binding site" evidence="1">
    <location>
        <position position="351"/>
    </location>
    <ligand>
        <name>Mn(2+)</name>
        <dbReference type="ChEBI" id="CHEBI:29035"/>
        <label>2</label>
    </ligand>
</feature>
<accession>Q9ZW21</accession>
<keyword id="KW-0378">Hydrolase</keyword>
<keyword id="KW-0460">Magnesium</keyword>
<keyword id="KW-0464">Manganese</keyword>
<keyword id="KW-0479">Metal-binding</keyword>
<keyword id="KW-0904">Protein phosphatase</keyword>
<keyword id="KW-1185">Reference proteome</keyword>
<evidence type="ECO:0000250" key="1"/>
<evidence type="ECO:0000255" key="2">
    <source>
        <dbReference type="PROSITE-ProRule" id="PRU01082"/>
    </source>
</evidence>
<evidence type="ECO:0000305" key="3"/>
<sequence length="362" mass="40297">MAEICYEVVTDACPSSVYESTPAHSRRRPRFQTVMHEDWEKNCKRSKQEALATRYSSIPRSSREDFSDQNVDVSSPRYGVSSVCGRRREMEDAVAIHPSFSSPKNSEFPQHYFGVYDGHGCSHVAARCRERLHKLVQEELSSDMEDEEEWKTTMERSFTRMDKEVVSWGDSVVTANCKCDLQTPACDSVGSTAVVSVITPDKIVVANCGDSRAVLCRNGKPVPLSTDHKPDRPDELDRIEGAGGRVIYWDCPRVLGVLAMSRAIGDNYLKPYVSCEPEVTITDRRDDDCLILASDGLWDVVSNETACSVARMCLRGGGRRQDNEDPAISDKACTEASVLLTKLALARNSSDNVSVVVIDLRR</sequence>
<organism>
    <name type="scientific">Arabidopsis thaliana</name>
    <name type="common">Mouse-ear cress</name>
    <dbReference type="NCBI Taxonomy" id="3702"/>
    <lineage>
        <taxon>Eukaryota</taxon>
        <taxon>Viridiplantae</taxon>
        <taxon>Streptophyta</taxon>
        <taxon>Embryophyta</taxon>
        <taxon>Tracheophyta</taxon>
        <taxon>Spermatophyta</taxon>
        <taxon>Magnoliopsida</taxon>
        <taxon>eudicotyledons</taxon>
        <taxon>Gunneridae</taxon>
        <taxon>Pentapetalae</taxon>
        <taxon>rosids</taxon>
        <taxon>malvids</taxon>
        <taxon>Brassicales</taxon>
        <taxon>Brassicaceae</taxon>
        <taxon>Camelineae</taxon>
        <taxon>Arabidopsis</taxon>
    </lineage>
</organism>
<reference key="1">
    <citation type="journal article" date="1999" name="Nature">
        <title>Sequence and analysis of chromosome 2 of the plant Arabidopsis thaliana.</title>
        <authorList>
            <person name="Lin X."/>
            <person name="Kaul S."/>
            <person name="Rounsley S.D."/>
            <person name="Shea T.P."/>
            <person name="Benito M.-I."/>
            <person name="Town C.D."/>
            <person name="Fujii C.Y."/>
            <person name="Mason T.M."/>
            <person name="Bowman C.L."/>
            <person name="Barnstead M.E."/>
            <person name="Feldblyum T.V."/>
            <person name="Buell C.R."/>
            <person name="Ketchum K.A."/>
            <person name="Lee J.J."/>
            <person name="Ronning C.M."/>
            <person name="Koo H.L."/>
            <person name="Moffat K.S."/>
            <person name="Cronin L.A."/>
            <person name="Shen M."/>
            <person name="Pai G."/>
            <person name="Van Aken S."/>
            <person name="Umayam L."/>
            <person name="Tallon L.J."/>
            <person name="Gill J.E."/>
            <person name="Adams M.D."/>
            <person name="Carrera A.J."/>
            <person name="Creasy T.H."/>
            <person name="Goodman H.M."/>
            <person name="Somerville C.R."/>
            <person name="Copenhaver G.P."/>
            <person name="Preuss D."/>
            <person name="Nierman W.C."/>
            <person name="White O."/>
            <person name="Eisen J.A."/>
            <person name="Salzberg S.L."/>
            <person name="Fraser C.M."/>
            <person name="Venter J.C."/>
        </authorList>
    </citation>
    <scope>NUCLEOTIDE SEQUENCE [LARGE SCALE GENOMIC DNA]</scope>
    <source>
        <strain>cv. Columbia</strain>
    </source>
</reference>
<reference key="2">
    <citation type="journal article" date="2017" name="Plant J.">
        <title>Araport11: a complete reannotation of the Arabidopsis thaliana reference genome.</title>
        <authorList>
            <person name="Cheng C.Y."/>
            <person name="Krishnakumar V."/>
            <person name="Chan A.P."/>
            <person name="Thibaud-Nissen F."/>
            <person name="Schobel S."/>
            <person name="Town C.D."/>
        </authorList>
    </citation>
    <scope>GENOME REANNOTATION</scope>
    <source>
        <strain>cv. Columbia</strain>
    </source>
</reference>
<reference key="3">
    <citation type="submission" date="2005-05" db="EMBL/GenBank/DDBJ databases">
        <authorList>
            <person name="Underwood B.A."/>
            <person name="Xiao Y.-L."/>
            <person name="Moskal W.A. Jr."/>
            <person name="Monaghan E.L."/>
            <person name="Wang W."/>
            <person name="Redman J.C."/>
            <person name="Wu H.C."/>
            <person name="Utterback T."/>
            <person name="Town C.D."/>
        </authorList>
    </citation>
    <scope>NUCLEOTIDE SEQUENCE [LARGE SCALE MRNA]</scope>
    <source>
        <strain>cv. Columbia</strain>
    </source>
</reference>
<reference key="4">
    <citation type="submission" date="2005-06" db="EMBL/GenBank/DDBJ databases">
        <title>Arabidopsis ORF clones.</title>
        <authorList>
            <person name="Kim C.J."/>
            <person name="Chen H."/>
            <person name="Cheuk R.F."/>
            <person name="Shinn P."/>
            <person name="Ecker J.R."/>
        </authorList>
    </citation>
    <scope>NUCLEOTIDE SEQUENCE [LARGE SCALE MRNA]</scope>
    <source>
        <strain>cv. Columbia</strain>
    </source>
</reference>
<reference key="5">
    <citation type="journal article" date="2008" name="BMC Genomics">
        <title>Genome-wide and expression analysis of protein phosphatase 2C in rice and Arabidopsis.</title>
        <authorList>
            <person name="Xue T."/>
            <person name="Wang D."/>
            <person name="Zhang S."/>
            <person name="Ehlting J."/>
            <person name="Ni F."/>
            <person name="Jacab S."/>
            <person name="Zheng C."/>
            <person name="Zhong Y."/>
        </authorList>
    </citation>
    <scope>GENE FAMILY</scope>
    <scope>NOMENCLATURE</scope>
</reference>
<comment type="catalytic activity">
    <reaction>
        <text>O-phospho-L-seryl-[protein] + H2O = L-seryl-[protein] + phosphate</text>
        <dbReference type="Rhea" id="RHEA:20629"/>
        <dbReference type="Rhea" id="RHEA-COMP:9863"/>
        <dbReference type="Rhea" id="RHEA-COMP:11604"/>
        <dbReference type="ChEBI" id="CHEBI:15377"/>
        <dbReference type="ChEBI" id="CHEBI:29999"/>
        <dbReference type="ChEBI" id="CHEBI:43474"/>
        <dbReference type="ChEBI" id="CHEBI:83421"/>
        <dbReference type="EC" id="3.1.3.16"/>
    </reaction>
</comment>
<comment type="catalytic activity">
    <reaction>
        <text>O-phospho-L-threonyl-[protein] + H2O = L-threonyl-[protein] + phosphate</text>
        <dbReference type="Rhea" id="RHEA:47004"/>
        <dbReference type="Rhea" id="RHEA-COMP:11060"/>
        <dbReference type="Rhea" id="RHEA-COMP:11605"/>
        <dbReference type="ChEBI" id="CHEBI:15377"/>
        <dbReference type="ChEBI" id="CHEBI:30013"/>
        <dbReference type="ChEBI" id="CHEBI:43474"/>
        <dbReference type="ChEBI" id="CHEBI:61977"/>
        <dbReference type="EC" id="3.1.3.16"/>
    </reaction>
</comment>
<comment type="cofactor">
    <cofactor evidence="1">
        <name>Mg(2+)</name>
        <dbReference type="ChEBI" id="CHEBI:18420"/>
    </cofactor>
    <cofactor evidence="1">
        <name>Mn(2+)</name>
        <dbReference type="ChEBI" id="CHEBI:29035"/>
    </cofactor>
    <text evidence="1">Binds 2 magnesium or manganese ions per subunit.</text>
</comment>
<comment type="interaction">
    <interactant intactId="EBI-4441103">
        <id>Q9ZW21</id>
    </interactant>
    <interactant intactId="EBI-1778843">
        <id>Q9S7Z2</id>
        <label>AFP4</label>
    </interactant>
    <organismsDiffer>false</organismsDiffer>
    <experiments>4</experiments>
</comment>
<comment type="interaction">
    <interactant intactId="EBI-4441103">
        <id>Q9ZW21</id>
    </interactant>
    <interactant intactId="EBI-25512274">
        <id>A0SVK0</id>
        <label>DOG1</label>
    </interactant>
    <organismsDiffer>false</organismsDiffer>
    <experiments>5</experiments>
</comment>
<comment type="interaction">
    <interactant intactId="EBI-4441103">
        <id>Q9ZW21</id>
    </interactant>
    <interactant intactId="EBI-25506855">
        <id>O23160</id>
        <label>MYB73</label>
    </interactant>
    <organismsDiffer>false</organismsDiffer>
    <experiments>3</experiments>
</comment>
<comment type="interaction">
    <interactant intactId="EBI-4441103">
        <id>Q9ZW21</id>
    </interactant>
    <interactant intactId="EBI-2363213">
        <id>Q8H1R0</id>
        <label>PYL10</label>
    </interactant>
    <organismsDiffer>false</organismsDiffer>
    <experiments>7</experiments>
</comment>
<comment type="interaction">
    <interactant intactId="EBI-4441103">
        <id>Q9ZW21</id>
    </interactant>
    <interactant intactId="EBI-2363233">
        <id>Q9FJ50</id>
        <label>PYL11</label>
    </interactant>
    <organismsDiffer>false</organismsDiffer>
    <experiments>7</experiments>
</comment>
<comment type="interaction">
    <interactant intactId="EBI-4441103">
        <id>Q9ZW21</id>
    </interactant>
    <interactant intactId="EBI-2363244">
        <id>Q9FJ49</id>
        <label>PYL12</label>
    </interactant>
    <organismsDiffer>false</organismsDiffer>
    <experiments>3</experiments>
</comment>
<comment type="interaction">
    <interactant intactId="EBI-4441103">
        <id>Q9ZW21</id>
    </interactant>
    <interactant intactId="EBI-25515027">
        <id>Q9SN51</id>
        <label>PYL13</label>
    </interactant>
    <organismsDiffer>false</organismsDiffer>
    <experiments>3</experiments>
</comment>
<comment type="interaction">
    <interactant intactId="EBI-4441103">
        <id>Q9ZW21</id>
    </interactant>
    <interactant intactId="EBI-2363144">
        <id>Q9SSM7</id>
        <label>PYL3</label>
    </interactant>
    <organismsDiffer>false</organismsDiffer>
    <experiments>3</experiments>
</comment>
<comment type="interaction">
    <interactant intactId="EBI-4441103">
        <id>Q9ZW21</id>
    </interactant>
    <interactant intactId="EBI-2349683">
        <id>O80920</id>
        <label>PYL4</label>
    </interactant>
    <organismsDiffer>false</organismsDiffer>
    <experiments>3</experiments>
</comment>
<comment type="interaction">
    <interactant intactId="EBI-4441103">
        <id>Q9ZW21</id>
    </interactant>
    <interactant intactId="EBI-2363181">
        <id>Q9FLB1</id>
        <label>PYL5</label>
    </interactant>
    <organismsDiffer>false</organismsDiffer>
    <experiments>3</experiments>
</comment>
<comment type="interaction">
    <interactant intactId="EBI-4441103">
        <id>Q9ZW21</id>
    </interactant>
    <interactant intactId="EBI-2363192">
        <id>Q8S8E3</id>
        <label>PYL6</label>
    </interactant>
    <organismsDiffer>false</organismsDiffer>
    <experiments>3</experiments>
</comment>
<comment type="interaction">
    <interactant intactId="EBI-4441103">
        <id>Q9ZW21</id>
    </interactant>
    <interactant intactId="EBI-2363203">
        <id>Q1ECF1</id>
        <label>PYL7</label>
    </interactant>
    <organismsDiffer>false</organismsDiffer>
    <experiments>5</experiments>
</comment>
<comment type="interaction">
    <interactant intactId="EBI-4441103">
        <id>Q9ZW21</id>
    </interactant>
    <interactant intactId="EBI-2429535">
        <id>Q9FGM1</id>
        <label>PYL8</label>
    </interactant>
    <organismsDiffer>false</organismsDiffer>
    <experiments>7</experiments>
</comment>
<comment type="interaction">
    <interactant intactId="EBI-4441103">
        <id>Q9ZW21</id>
    </interactant>
    <interactant intactId="EBI-2349513">
        <id>Q84MC7</id>
        <label>PYL9</label>
    </interactant>
    <organismsDiffer>false</organismsDiffer>
    <experiments>8</experiments>
</comment>
<comment type="similarity">
    <text evidence="3">Belongs to the PP2C family.</text>
</comment>
<protein>
    <recommendedName>
        <fullName>Probable protein phosphatase 2C 24</fullName>
        <shortName>AtPP2C24</shortName>
        <ecNumber>3.1.3.16</ecNumber>
    </recommendedName>
</protein>
<gene>
    <name type="ordered locus">At2g29380</name>
    <name type="ORF">F16P2.24</name>
</gene>
<proteinExistence type="evidence at protein level"/>